<keyword id="KW-0150">Chloroplast</keyword>
<keyword id="KW-0934">Plastid</keyword>
<keyword id="KW-0687">Ribonucleoprotein</keyword>
<keyword id="KW-0689">Ribosomal protein</keyword>
<keyword id="KW-0694">RNA-binding</keyword>
<keyword id="KW-0699">rRNA-binding</keyword>
<organism>
    <name type="scientific">Ipomoea purpurea</name>
    <name type="common">Common morning glory</name>
    <name type="synonym">Pharbitis purpurea</name>
    <dbReference type="NCBI Taxonomy" id="4121"/>
    <lineage>
        <taxon>Eukaryota</taxon>
        <taxon>Viridiplantae</taxon>
        <taxon>Streptophyta</taxon>
        <taxon>Embryophyta</taxon>
        <taxon>Tracheophyta</taxon>
        <taxon>Spermatophyta</taxon>
        <taxon>Magnoliopsida</taxon>
        <taxon>eudicotyledons</taxon>
        <taxon>Gunneridae</taxon>
        <taxon>Pentapetalae</taxon>
        <taxon>asterids</taxon>
        <taxon>lamiids</taxon>
        <taxon>Solanales</taxon>
        <taxon>Convolvulaceae</taxon>
        <taxon>Ipomoeeae</taxon>
        <taxon>Ipomoea</taxon>
    </lineage>
</organism>
<proteinExistence type="inferred from homology"/>
<dbReference type="EMBL" id="EU118126">
    <property type="protein sequence ID" value="ABV02393.1"/>
    <property type="molecule type" value="Genomic_DNA"/>
</dbReference>
<dbReference type="EMBL" id="EU118126">
    <property type="protein sequence ID" value="ABV02412.1"/>
    <property type="molecule type" value="Genomic_DNA"/>
</dbReference>
<dbReference type="SMR" id="A7Y3J9"/>
<dbReference type="GO" id="GO:0009507">
    <property type="term" value="C:chloroplast"/>
    <property type="evidence" value="ECO:0007669"/>
    <property type="project" value="UniProtKB-SubCell"/>
</dbReference>
<dbReference type="GO" id="GO:0015935">
    <property type="term" value="C:small ribosomal subunit"/>
    <property type="evidence" value="ECO:0007669"/>
    <property type="project" value="InterPro"/>
</dbReference>
<dbReference type="GO" id="GO:0019843">
    <property type="term" value="F:rRNA binding"/>
    <property type="evidence" value="ECO:0007669"/>
    <property type="project" value="UniProtKB-UniRule"/>
</dbReference>
<dbReference type="GO" id="GO:0003735">
    <property type="term" value="F:structural constituent of ribosome"/>
    <property type="evidence" value="ECO:0007669"/>
    <property type="project" value="InterPro"/>
</dbReference>
<dbReference type="GO" id="GO:0006412">
    <property type="term" value="P:translation"/>
    <property type="evidence" value="ECO:0007669"/>
    <property type="project" value="UniProtKB-UniRule"/>
</dbReference>
<dbReference type="CDD" id="cd14871">
    <property type="entry name" value="uS7_Chloroplast"/>
    <property type="match status" value="1"/>
</dbReference>
<dbReference type="FunFam" id="1.10.455.10:FF:000001">
    <property type="entry name" value="30S ribosomal protein S7"/>
    <property type="match status" value="1"/>
</dbReference>
<dbReference type="Gene3D" id="1.10.455.10">
    <property type="entry name" value="Ribosomal protein S7 domain"/>
    <property type="match status" value="1"/>
</dbReference>
<dbReference type="HAMAP" id="MF_00480_B">
    <property type="entry name" value="Ribosomal_uS7_B"/>
    <property type="match status" value="1"/>
</dbReference>
<dbReference type="InterPro" id="IPR000235">
    <property type="entry name" value="Ribosomal_uS7"/>
</dbReference>
<dbReference type="InterPro" id="IPR005717">
    <property type="entry name" value="Ribosomal_uS7_bac/org-type"/>
</dbReference>
<dbReference type="InterPro" id="IPR020606">
    <property type="entry name" value="Ribosomal_uS7_CS"/>
</dbReference>
<dbReference type="InterPro" id="IPR023798">
    <property type="entry name" value="Ribosomal_uS7_dom"/>
</dbReference>
<dbReference type="InterPro" id="IPR036823">
    <property type="entry name" value="Ribosomal_uS7_dom_sf"/>
</dbReference>
<dbReference type="NCBIfam" id="TIGR01029">
    <property type="entry name" value="rpsG_bact"/>
    <property type="match status" value="1"/>
</dbReference>
<dbReference type="PANTHER" id="PTHR11205">
    <property type="entry name" value="RIBOSOMAL PROTEIN S7"/>
    <property type="match status" value="1"/>
</dbReference>
<dbReference type="Pfam" id="PF00177">
    <property type="entry name" value="Ribosomal_S7"/>
    <property type="match status" value="1"/>
</dbReference>
<dbReference type="PIRSF" id="PIRSF002122">
    <property type="entry name" value="RPS7p_RPS7a_RPS5e_RPS7o"/>
    <property type="match status" value="1"/>
</dbReference>
<dbReference type="SUPFAM" id="SSF47973">
    <property type="entry name" value="Ribosomal protein S7"/>
    <property type="match status" value="1"/>
</dbReference>
<dbReference type="PROSITE" id="PS00052">
    <property type="entry name" value="RIBOSOMAL_S7"/>
    <property type="match status" value="1"/>
</dbReference>
<geneLocation type="chloroplast"/>
<accession>A7Y3J9</accession>
<gene>
    <name type="primary">rps7-A</name>
</gene>
<gene>
    <name type="primary">rps7-B</name>
</gene>
<protein>
    <recommendedName>
        <fullName evidence="2">Small ribosomal subunit protein uS7cz/uS7cy</fullName>
    </recommendedName>
    <alternativeName>
        <fullName>30S ribosomal protein S7, chloroplastic</fullName>
    </alternativeName>
</protein>
<name>RR7_IPOPU</name>
<comment type="function">
    <text evidence="1">One of the primary rRNA binding proteins, it binds directly to 16S rRNA where it nucleates assembly of the head domain of the 30S subunit.</text>
</comment>
<comment type="subunit">
    <text evidence="1">Part of the 30S ribosomal subunit.</text>
</comment>
<comment type="subcellular location">
    <subcellularLocation>
        <location>Plastid</location>
        <location>Chloroplast</location>
    </subcellularLocation>
</comment>
<comment type="similarity">
    <text evidence="3">Belongs to the universal ribosomal protein uS7 family.</text>
</comment>
<sequence>MSRRGTAEKKTAKSDPIYRNRLVNMLVNRILKHGKKSLAYQIIYRAVKKIQQKTETNPLSVLRQAIRGVTPNITVKARRVGGSTHQVPIEIGSTQGKALAVRWLLAASRKRPGRDMAFKLSSELVDAAKGSGDAIRKKEETLRMAEANRAFAHFR</sequence>
<evidence type="ECO:0000250" key="1"/>
<evidence type="ECO:0000255" key="2">
    <source>
        <dbReference type="HAMAP-Rule" id="MF_00480"/>
    </source>
</evidence>
<evidence type="ECO:0000305" key="3"/>
<feature type="chain" id="PRO_0000344343" description="Small ribosomal subunit protein uS7cz/uS7cy">
    <location>
        <begin position="1"/>
        <end position="155"/>
    </location>
</feature>
<reference key="1">
    <citation type="journal article" date="2007" name="BMC Plant Biol.">
        <title>Complete plastid genome sequences suggest strong selection for retention of photosynthetic genes in the parasitic plant genus Cuscuta.</title>
        <authorList>
            <person name="McNeal J.R."/>
            <person name="Kuehl J.V."/>
            <person name="Boore J.L."/>
            <person name="dePamphilis C.W."/>
        </authorList>
    </citation>
    <scope>NUCLEOTIDE SEQUENCE [LARGE SCALE GENOMIC DNA]</scope>
</reference>